<comment type="function">
    <text evidence="1">Catalyzes the thiamine diphosphate-dependent decarboxylation of 2-oxoglutarate and the subsequent addition of the resulting succinic semialdehyde-thiamine pyrophosphate anion to isochorismate to yield 2-succinyl-5-enolpyruvyl-6-hydroxy-3-cyclohexene-1-carboxylate (SEPHCHC).</text>
</comment>
<comment type="catalytic activity">
    <reaction evidence="1">
        <text>isochorismate + 2-oxoglutarate + H(+) = 5-enolpyruvoyl-6-hydroxy-2-succinyl-cyclohex-3-ene-1-carboxylate + CO2</text>
        <dbReference type="Rhea" id="RHEA:25593"/>
        <dbReference type="ChEBI" id="CHEBI:15378"/>
        <dbReference type="ChEBI" id="CHEBI:16526"/>
        <dbReference type="ChEBI" id="CHEBI:16810"/>
        <dbReference type="ChEBI" id="CHEBI:29780"/>
        <dbReference type="ChEBI" id="CHEBI:58818"/>
        <dbReference type="EC" id="2.2.1.9"/>
    </reaction>
</comment>
<comment type="cofactor">
    <cofactor evidence="1">
        <name>Mg(2+)</name>
        <dbReference type="ChEBI" id="CHEBI:18420"/>
    </cofactor>
    <cofactor evidence="1">
        <name>Mn(2+)</name>
        <dbReference type="ChEBI" id="CHEBI:29035"/>
    </cofactor>
</comment>
<comment type="cofactor">
    <cofactor evidence="1">
        <name>thiamine diphosphate</name>
        <dbReference type="ChEBI" id="CHEBI:58937"/>
    </cofactor>
    <text evidence="1">Binds 1 thiamine pyrophosphate per subunit.</text>
</comment>
<comment type="pathway">
    <text evidence="1">Quinol/quinone metabolism; 1,4-dihydroxy-2-naphthoate biosynthesis; 1,4-dihydroxy-2-naphthoate from chorismate: step 2/7.</text>
</comment>
<comment type="pathway">
    <text evidence="1">Quinol/quinone metabolism; menaquinone biosynthesis.</text>
</comment>
<comment type="subunit">
    <text evidence="1">Homodimer.</text>
</comment>
<comment type="similarity">
    <text evidence="1">Belongs to the TPP enzyme family. MenD subfamily.</text>
</comment>
<keyword id="KW-0460">Magnesium</keyword>
<keyword id="KW-0464">Manganese</keyword>
<keyword id="KW-0474">Menaquinone biosynthesis</keyword>
<keyword id="KW-0479">Metal-binding</keyword>
<keyword id="KW-0786">Thiamine pyrophosphate</keyword>
<keyword id="KW-0808">Transferase</keyword>
<name>MEND_SALG2</name>
<evidence type="ECO:0000255" key="1">
    <source>
        <dbReference type="HAMAP-Rule" id="MF_01659"/>
    </source>
</evidence>
<protein>
    <recommendedName>
        <fullName evidence="1">2-succinyl-5-enolpyruvyl-6-hydroxy-3-cyclohexene-1-carboxylate synthase</fullName>
        <shortName evidence="1">SEPHCHC synthase</shortName>
        <ecNumber evidence="1">2.2.1.9</ecNumber>
    </recommendedName>
    <alternativeName>
        <fullName evidence="1">Menaquinone biosynthesis protein MenD</fullName>
    </alternativeName>
</protein>
<reference key="1">
    <citation type="journal article" date="2008" name="Genome Res.">
        <title>Comparative genome analysis of Salmonella enteritidis PT4 and Salmonella gallinarum 287/91 provides insights into evolutionary and host adaptation pathways.</title>
        <authorList>
            <person name="Thomson N.R."/>
            <person name="Clayton D.J."/>
            <person name="Windhorst D."/>
            <person name="Vernikos G."/>
            <person name="Davidson S."/>
            <person name="Churcher C."/>
            <person name="Quail M.A."/>
            <person name="Stevens M."/>
            <person name="Jones M.A."/>
            <person name="Watson M."/>
            <person name="Barron A."/>
            <person name="Layton A."/>
            <person name="Pickard D."/>
            <person name="Kingsley R.A."/>
            <person name="Bignell A."/>
            <person name="Clark L."/>
            <person name="Harris B."/>
            <person name="Ormond D."/>
            <person name="Abdellah Z."/>
            <person name="Brooks K."/>
            <person name="Cherevach I."/>
            <person name="Chillingworth T."/>
            <person name="Woodward J."/>
            <person name="Norberczak H."/>
            <person name="Lord A."/>
            <person name="Arrowsmith C."/>
            <person name="Jagels K."/>
            <person name="Moule S."/>
            <person name="Mungall K."/>
            <person name="Saunders M."/>
            <person name="Whitehead S."/>
            <person name="Chabalgoity J.A."/>
            <person name="Maskell D."/>
            <person name="Humphreys T."/>
            <person name="Roberts M."/>
            <person name="Barrow P.A."/>
            <person name="Dougan G."/>
            <person name="Parkhill J."/>
        </authorList>
    </citation>
    <scope>NUCLEOTIDE SEQUENCE [LARGE SCALE GENOMIC DNA]</scope>
    <source>
        <strain>287/91 / NCTC 13346</strain>
    </source>
</reference>
<dbReference type="EC" id="2.2.1.9" evidence="1"/>
<dbReference type="EMBL" id="AM933173">
    <property type="protein sequence ID" value="CAR38168.1"/>
    <property type="molecule type" value="Genomic_DNA"/>
</dbReference>
<dbReference type="RefSeq" id="WP_000116401.1">
    <property type="nucleotide sequence ID" value="NC_011274.1"/>
</dbReference>
<dbReference type="SMR" id="B5RCD4"/>
<dbReference type="KEGG" id="seg:SG2338"/>
<dbReference type="HOGENOM" id="CLU_006051_3_0_6"/>
<dbReference type="UniPathway" id="UPA00079"/>
<dbReference type="UniPathway" id="UPA01057">
    <property type="reaction ID" value="UER00164"/>
</dbReference>
<dbReference type="Proteomes" id="UP000008321">
    <property type="component" value="Chromosome"/>
</dbReference>
<dbReference type="GO" id="GO:0070204">
    <property type="term" value="F:2-succinyl-5-enolpyruvyl-6-hydroxy-3-cyclohexene-1-carboxylic-acid synthase activity"/>
    <property type="evidence" value="ECO:0007669"/>
    <property type="project" value="UniProtKB-UniRule"/>
</dbReference>
<dbReference type="GO" id="GO:0000287">
    <property type="term" value="F:magnesium ion binding"/>
    <property type="evidence" value="ECO:0007669"/>
    <property type="project" value="UniProtKB-UniRule"/>
</dbReference>
<dbReference type="GO" id="GO:0030145">
    <property type="term" value="F:manganese ion binding"/>
    <property type="evidence" value="ECO:0007669"/>
    <property type="project" value="UniProtKB-UniRule"/>
</dbReference>
<dbReference type="GO" id="GO:0030976">
    <property type="term" value="F:thiamine pyrophosphate binding"/>
    <property type="evidence" value="ECO:0007669"/>
    <property type="project" value="UniProtKB-UniRule"/>
</dbReference>
<dbReference type="GO" id="GO:0009234">
    <property type="term" value="P:menaquinone biosynthetic process"/>
    <property type="evidence" value="ECO:0007669"/>
    <property type="project" value="UniProtKB-UniRule"/>
</dbReference>
<dbReference type="CDD" id="cd07037">
    <property type="entry name" value="TPP_PYR_MenD"/>
    <property type="match status" value="1"/>
</dbReference>
<dbReference type="CDD" id="cd02009">
    <property type="entry name" value="TPP_SHCHC_synthase"/>
    <property type="match status" value="1"/>
</dbReference>
<dbReference type="FunFam" id="3.40.50.1220:FF:000010">
    <property type="entry name" value="2-succinyl-5-enolpyruvyl-6-hydroxy-3-cyclohexene-1-carboxylate synthase"/>
    <property type="match status" value="1"/>
</dbReference>
<dbReference type="FunFam" id="3.40.50.970:FF:000029">
    <property type="entry name" value="2-succinyl-5-enolpyruvyl-6-hydroxy-3-cyclohexene-1-carboxylate synthase"/>
    <property type="match status" value="1"/>
</dbReference>
<dbReference type="Gene3D" id="3.40.50.970">
    <property type="match status" value="2"/>
</dbReference>
<dbReference type="Gene3D" id="3.40.50.1220">
    <property type="entry name" value="TPP-binding domain"/>
    <property type="match status" value="1"/>
</dbReference>
<dbReference type="HAMAP" id="MF_01659">
    <property type="entry name" value="MenD"/>
    <property type="match status" value="1"/>
</dbReference>
<dbReference type="InterPro" id="IPR004433">
    <property type="entry name" value="MenaQ_synth_MenD"/>
</dbReference>
<dbReference type="InterPro" id="IPR032264">
    <property type="entry name" value="MenD_middle"/>
</dbReference>
<dbReference type="InterPro" id="IPR029061">
    <property type="entry name" value="THDP-binding"/>
</dbReference>
<dbReference type="InterPro" id="IPR012001">
    <property type="entry name" value="Thiamin_PyroP_enz_TPP-bd_dom"/>
</dbReference>
<dbReference type="InterPro" id="IPR011766">
    <property type="entry name" value="TPP_enzyme_TPP-bd"/>
</dbReference>
<dbReference type="NCBIfam" id="TIGR00173">
    <property type="entry name" value="menD"/>
    <property type="match status" value="1"/>
</dbReference>
<dbReference type="PANTHER" id="PTHR42916">
    <property type="entry name" value="2-SUCCINYL-5-ENOLPYRUVYL-6-HYDROXY-3-CYCLOHEXENE-1-CARBOXYLATE SYNTHASE"/>
    <property type="match status" value="1"/>
</dbReference>
<dbReference type="PANTHER" id="PTHR42916:SF1">
    <property type="entry name" value="PROTEIN PHYLLO, CHLOROPLASTIC"/>
    <property type="match status" value="1"/>
</dbReference>
<dbReference type="Pfam" id="PF02775">
    <property type="entry name" value="TPP_enzyme_C"/>
    <property type="match status" value="1"/>
</dbReference>
<dbReference type="Pfam" id="PF16582">
    <property type="entry name" value="TPP_enzyme_M_2"/>
    <property type="match status" value="1"/>
</dbReference>
<dbReference type="Pfam" id="PF02776">
    <property type="entry name" value="TPP_enzyme_N"/>
    <property type="match status" value="1"/>
</dbReference>
<dbReference type="PIRSF" id="PIRSF004983">
    <property type="entry name" value="MenD"/>
    <property type="match status" value="1"/>
</dbReference>
<dbReference type="SUPFAM" id="SSF52518">
    <property type="entry name" value="Thiamin diphosphate-binding fold (THDP-binding)"/>
    <property type="match status" value="2"/>
</dbReference>
<organism>
    <name type="scientific">Salmonella gallinarum (strain 287/91 / NCTC 13346)</name>
    <dbReference type="NCBI Taxonomy" id="550538"/>
    <lineage>
        <taxon>Bacteria</taxon>
        <taxon>Pseudomonadati</taxon>
        <taxon>Pseudomonadota</taxon>
        <taxon>Gammaproteobacteria</taxon>
        <taxon>Enterobacterales</taxon>
        <taxon>Enterobacteriaceae</taxon>
        <taxon>Salmonella</taxon>
    </lineage>
</organism>
<feature type="chain" id="PRO_1000187091" description="2-succinyl-5-enolpyruvyl-6-hydroxy-3-cyclohexene-1-carboxylate synthase">
    <location>
        <begin position="1"/>
        <end position="556"/>
    </location>
</feature>
<gene>
    <name evidence="1" type="primary">menD</name>
    <name type="ordered locus">SG2338</name>
</gene>
<accession>B5RCD4</accession>
<proteinExistence type="inferred from homology"/>
<sequence length="556" mass="61513">MSVSAFNRRWAAVILEALTRHGVRHVCIAPGSRSTPLTLAAAENPAFIHHTHFDERGLGHLALGLAKVSQQPVAVIVTSGTAVANLYSALIEAGLTGEKLILLTADRPPELIDCGANQAIRQAGMFASHPSQTLSLPRPTQDIPARWLVSTIDNALAMLHAGALHINCPFAEPLYGDMNDTGLVWQQRLGDWWQDEKPWLREARRLESDKQRDWFFWRQKRGVVVAGRMSAEEGKKVAQWAQTLGWPLIGDVLSQTGQPLPCADLWLGNAKAVTELQQAQIVVQLGSSLTGKRLLQWQATCEPEEYWVIDNIEGRLDPAHHRGRRLVAKIADWLELHPAEKRKPWCVEIPRLAELAWQRVVAQRDTFGEAQLAHRIRDYLPEQGQLFVGNSLVVRLIDALSQLPAGYPVYSNRGASGIDGLLSTAAGVQRASAKSTLAIVGDLSALYDLNALALLRQVSAPFVLIVVNNNGGQIFSLLPTPQSKRERFYLMPQNVHFDHAAAMFNLRYHRPENWEELESALAGAWRTPATTVIELVVNDTDGAQTLQQLLAQVSHL</sequence>